<comment type="function">
    <text evidence="1">Catalyzes the phosphorylation of N-acetyl-D-glucosamine (GlcNAc) derived from cell-wall degradation, yielding GlcNAc-6-P.</text>
</comment>
<comment type="catalytic activity">
    <reaction evidence="1">
        <text>N-acetyl-D-glucosamine + ATP = N-acetyl-D-glucosamine 6-phosphate + ADP + H(+)</text>
        <dbReference type="Rhea" id="RHEA:17417"/>
        <dbReference type="ChEBI" id="CHEBI:15378"/>
        <dbReference type="ChEBI" id="CHEBI:30616"/>
        <dbReference type="ChEBI" id="CHEBI:57513"/>
        <dbReference type="ChEBI" id="CHEBI:456216"/>
        <dbReference type="ChEBI" id="CHEBI:506227"/>
        <dbReference type="EC" id="2.7.1.59"/>
    </reaction>
</comment>
<comment type="pathway">
    <text evidence="1">Cell wall biogenesis; peptidoglycan recycling.</text>
</comment>
<comment type="similarity">
    <text evidence="1">Belongs to the ROK (NagC/XylR) family. NagK subfamily.</text>
</comment>
<name>NAGK_VIBA3</name>
<protein>
    <recommendedName>
        <fullName evidence="1">N-acetyl-D-glucosamine kinase</fullName>
        <ecNumber evidence="1">2.7.1.59</ecNumber>
    </recommendedName>
    <alternativeName>
        <fullName evidence="1">GlcNAc kinase</fullName>
    </alternativeName>
</protein>
<keyword id="KW-0067">ATP-binding</keyword>
<keyword id="KW-0119">Carbohydrate metabolism</keyword>
<keyword id="KW-0418">Kinase</keyword>
<keyword id="KW-0479">Metal-binding</keyword>
<keyword id="KW-0547">Nucleotide-binding</keyword>
<keyword id="KW-0808">Transferase</keyword>
<keyword id="KW-0862">Zinc</keyword>
<proteinExistence type="inferred from homology"/>
<dbReference type="EC" id="2.7.1.59" evidence="1"/>
<dbReference type="EMBL" id="FM954972">
    <property type="protein sequence ID" value="CAV18676.1"/>
    <property type="molecule type" value="Genomic_DNA"/>
</dbReference>
<dbReference type="SMR" id="B7VNU4"/>
<dbReference type="STRING" id="575788.VS_1507"/>
<dbReference type="KEGG" id="vsp:VS_1507"/>
<dbReference type="eggNOG" id="COG1940">
    <property type="taxonomic scope" value="Bacteria"/>
</dbReference>
<dbReference type="HOGENOM" id="CLU_036604_0_3_6"/>
<dbReference type="UniPathway" id="UPA00544"/>
<dbReference type="Proteomes" id="UP000009100">
    <property type="component" value="Chromosome 1"/>
</dbReference>
<dbReference type="GO" id="GO:0005524">
    <property type="term" value="F:ATP binding"/>
    <property type="evidence" value="ECO:0007669"/>
    <property type="project" value="UniProtKB-UniRule"/>
</dbReference>
<dbReference type="GO" id="GO:0045127">
    <property type="term" value="F:N-acetylglucosamine kinase activity"/>
    <property type="evidence" value="ECO:0007669"/>
    <property type="project" value="UniProtKB-UniRule"/>
</dbReference>
<dbReference type="GO" id="GO:0008270">
    <property type="term" value="F:zinc ion binding"/>
    <property type="evidence" value="ECO:0007669"/>
    <property type="project" value="UniProtKB-UniRule"/>
</dbReference>
<dbReference type="GO" id="GO:0006044">
    <property type="term" value="P:N-acetylglucosamine metabolic process"/>
    <property type="evidence" value="ECO:0007669"/>
    <property type="project" value="UniProtKB-UniRule"/>
</dbReference>
<dbReference type="GO" id="GO:0009254">
    <property type="term" value="P:peptidoglycan turnover"/>
    <property type="evidence" value="ECO:0007669"/>
    <property type="project" value="UniProtKB-UniRule"/>
</dbReference>
<dbReference type="CDD" id="cd24057">
    <property type="entry name" value="ASKHA_NBD_ROK_NAGK"/>
    <property type="match status" value="1"/>
</dbReference>
<dbReference type="FunFam" id="3.30.420.40:FF:000049">
    <property type="entry name" value="N-acetyl-D-glucosamine kinase"/>
    <property type="match status" value="1"/>
</dbReference>
<dbReference type="Gene3D" id="3.30.420.40">
    <property type="match status" value="2"/>
</dbReference>
<dbReference type="HAMAP" id="MF_01271">
    <property type="entry name" value="GlcNAc_kinase"/>
    <property type="match status" value="1"/>
</dbReference>
<dbReference type="InterPro" id="IPR043129">
    <property type="entry name" value="ATPase_NBD"/>
</dbReference>
<dbReference type="InterPro" id="IPR023505">
    <property type="entry name" value="N-acetyl-D-glucosamine_kinase"/>
</dbReference>
<dbReference type="InterPro" id="IPR000600">
    <property type="entry name" value="ROK"/>
</dbReference>
<dbReference type="InterPro" id="IPR049874">
    <property type="entry name" value="ROK_cs"/>
</dbReference>
<dbReference type="NCBIfam" id="NF009835">
    <property type="entry name" value="PRK13310.1"/>
    <property type="match status" value="1"/>
</dbReference>
<dbReference type="PANTHER" id="PTHR18964:SF162">
    <property type="entry name" value="N-ACETYL-D-GLUCOSAMINE KINASE"/>
    <property type="match status" value="1"/>
</dbReference>
<dbReference type="PANTHER" id="PTHR18964">
    <property type="entry name" value="ROK (REPRESSOR, ORF, KINASE) FAMILY"/>
    <property type="match status" value="1"/>
</dbReference>
<dbReference type="Pfam" id="PF00480">
    <property type="entry name" value="ROK"/>
    <property type="match status" value="1"/>
</dbReference>
<dbReference type="SUPFAM" id="SSF53067">
    <property type="entry name" value="Actin-like ATPase domain"/>
    <property type="match status" value="1"/>
</dbReference>
<dbReference type="PROSITE" id="PS01125">
    <property type="entry name" value="ROK"/>
    <property type="match status" value="1"/>
</dbReference>
<organism>
    <name type="scientific">Vibrio atlanticus (strain LGP32)</name>
    <name type="common">Vibrio splendidus (strain Mel32)</name>
    <dbReference type="NCBI Taxonomy" id="575788"/>
    <lineage>
        <taxon>Bacteria</taxon>
        <taxon>Pseudomonadati</taxon>
        <taxon>Pseudomonadota</taxon>
        <taxon>Gammaproteobacteria</taxon>
        <taxon>Vibrionales</taxon>
        <taxon>Vibrionaceae</taxon>
        <taxon>Vibrio</taxon>
    </lineage>
</organism>
<reference key="1">
    <citation type="submission" date="2009-02" db="EMBL/GenBank/DDBJ databases">
        <title>Vibrio splendidus str. LGP32 complete genome.</title>
        <authorList>
            <person name="Mazel D."/>
            <person name="Le Roux F."/>
        </authorList>
    </citation>
    <scope>NUCLEOTIDE SEQUENCE [LARGE SCALE GENOMIC DNA]</scope>
    <source>
        <strain>LGP32</strain>
    </source>
</reference>
<sequence length="302" mass="32820">MYYGFDVGGTKIEFGAFNEKLERVATERVPTPTEDYQLLLDTIAGLVKKYDNEFSCEGKIGLGLPGMEDADDGTMLVVNVPASTGKPLRKDLEALIGRSVKIENDANCFALSEAWDDELKDEPSVAGLILGTGFGGGLVYEGKVFSGRNHVAGELGHMRLPLDAWFHLGDNAPLLGCGCGKKGCLDSYLSGRGFELIYEHYFGEKKKAIEIIQAYNEGESKAAEHVDRFMELLAICFANLFTGLDPHVVALGGGLSNFELIYEEMPKRIPKYLLSVAKCPKIIKAKHGDSGGVRGAAFLNIK</sequence>
<gene>
    <name evidence="1" type="primary">nagK</name>
    <name type="ordered locus">VS_1507</name>
</gene>
<evidence type="ECO:0000255" key="1">
    <source>
        <dbReference type="HAMAP-Rule" id="MF_01271"/>
    </source>
</evidence>
<feature type="chain" id="PRO_1000165176" description="N-acetyl-D-glucosamine kinase">
    <location>
        <begin position="1"/>
        <end position="302"/>
    </location>
</feature>
<feature type="binding site" evidence="1">
    <location>
        <begin position="4"/>
        <end position="11"/>
    </location>
    <ligand>
        <name>ATP</name>
        <dbReference type="ChEBI" id="CHEBI:30616"/>
    </ligand>
</feature>
<feature type="binding site" evidence="1">
    <location>
        <begin position="133"/>
        <end position="140"/>
    </location>
    <ligand>
        <name>ATP</name>
        <dbReference type="ChEBI" id="CHEBI:30616"/>
    </ligand>
</feature>
<feature type="binding site" evidence="1">
    <location>
        <position position="157"/>
    </location>
    <ligand>
        <name>Zn(2+)</name>
        <dbReference type="ChEBI" id="CHEBI:29105"/>
    </ligand>
</feature>
<feature type="binding site" evidence="1">
    <location>
        <position position="177"/>
    </location>
    <ligand>
        <name>Zn(2+)</name>
        <dbReference type="ChEBI" id="CHEBI:29105"/>
    </ligand>
</feature>
<feature type="binding site" evidence="1">
    <location>
        <position position="179"/>
    </location>
    <ligand>
        <name>Zn(2+)</name>
        <dbReference type="ChEBI" id="CHEBI:29105"/>
    </ligand>
</feature>
<feature type="binding site" evidence="1">
    <location>
        <position position="184"/>
    </location>
    <ligand>
        <name>Zn(2+)</name>
        <dbReference type="ChEBI" id="CHEBI:29105"/>
    </ligand>
</feature>
<accession>B7VNU4</accession>